<comment type="subcellular location">
    <subcellularLocation>
        <location evidence="1">Nucleus</location>
        <location evidence="1">Nucleolus</location>
    </subcellularLocation>
</comment>
<comment type="similarity">
    <text evidence="4">Belongs to the PNMA family.</text>
</comment>
<dbReference type="EMBL" id="AB047632">
    <property type="protein sequence ID" value="BAB12156.1"/>
    <property type="molecule type" value="mRNA"/>
</dbReference>
<dbReference type="RefSeq" id="NP_001335379.1">
    <property type="nucleotide sequence ID" value="NM_001348450.1"/>
</dbReference>
<dbReference type="RefSeq" id="XP_015309856.1">
    <property type="nucleotide sequence ID" value="XM_015454370.1"/>
</dbReference>
<dbReference type="SMR" id="Q9GMU3"/>
<dbReference type="STRING" id="9541.ENSMFAP00000001844"/>
<dbReference type="Ensembl" id="ENSMFAT00000000389.2">
    <property type="protein sequence ID" value="ENSMFAP00000001844.1"/>
    <property type="gene ID" value="ENSMFAG00000000029.2"/>
</dbReference>
<dbReference type="GeneID" id="102124250"/>
<dbReference type="KEGG" id="mcf:102124250"/>
<dbReference type="CTD" id="10687"/>
<dbReference type="VEuPathDB" id="HostDB:ENSMFAG00000000029"/>
<dbReference type="eggNOG" id="ENOG502RWTN">
    <property type="taxonomic scope" value="Eukaryota"/>
</dbReference>
<dbReference type="GeneTree" id="ENSGT01030000234522"/>
<dbReference type="OMA" id="GPWENEA"/>
<dbReference type="OrthoDB" id="9943at314294"/>
<dbReference type="Proteomes" id="UP000233100">
    <property type="component" value="Chromosome 8"/>
</dbReference>
<dbReference type="Bgee" id="ENSMFAG00000000029">
    <property type="expression patterns" value="Expressed in temporal lobe and 3 other cell types or tissues"/>
</dbReference>
<dbReference type="GO" id="GO:0005730">
    <property type="term" value="C:nucleolus"/>
    <property type="evidence" value="ECO:0007669"/>
    <property type="project" value="UniProtKB-SubCell"/>
</dbReference>
<dbReference type="InterPro" id="IPR026523">
    <property type="entry name" value="PNMA"/>
</dbReference>
<dbReference type="InterPro" id="IPR048270">
    <property type="entry name" value="PNMA_C"/>
</dbReference>
<dbReference type="InterPro" id="IPR048271">
    <property type="entry name" value="PNMA_N"/>
</dbReference>
<dbReference type="PANTHER" id="PTHR23095">
    <property type="entry name" value="PARANEOPLASTIC ANTIGEN"/>
    <property type="match status" value="1"/>
</dbReference>
<dbReference type="PANTHER" id="PTHR23095:SF16">
    <property type="entry name" value="PARANEOPLASTIC ANTIGEN MA2"/>
    <property type="match status" value="1"/>
</dbReference>
<dbReference type="Pfam" id="PF14893">
    <property type="entry name" value="PNMA"/>
    <property type="match status" value="1"/>
</dbReference>
<dbReference type="Pfam" id="PF20846">
    <property type="entry name" value="PNMA_N"/>
    <property type="match status" value="1"/>
</dbReference>
<accession>Q9GMU3</accession>
<protein>
    <recommendedName>
        <fullName>Paraneoplastic antigen Ma2 homolog</fullName>
    </recommendedName>
</protein>
<evidence type="ECO:0000250" key="1"/>
<evidence type="ECO:0000250" key="2">
    <source>
        <dbReference type="UniProtKB" id="Q9UL42"/>
    </source>
</evidence>
<evidence type="ECO:0000256" key="3">
    <source>
        <dbReference type="SAM" id="MobiDB-lite"/>
    </source>
</evidence>
<evidence type="ECO:0000305" key="4"/>
<feature type="initiator methionine" description="Removed" evidence="2">
    <location>
        <position position="1"/>
    </location>
</feature>
<feature type="chain" id="PRO_0000155203" description="Paraneoplastic antigen Ma2 homolog">
    <location>
        <begin position="2"/>
        <end position="364"/>
    </location>
</feature>
<feature type="region of interest" description="Disordered" evidence="3">
    <location>
        <begin position="335"/>
        <end position="364"/>
    </location>
</feature>
<feature type="compositionally biased region" description="Acidic residues" evidence="3">
    <location>
        <begin position="335"/>
        <end position="353"/>
    </location>
</feature>
<feature type="compositionally biased region" description="Gly residues" evidence="3">
    <location>
        <begin position="354"/>
        <end position="364"/>
    </location>
</feature>
<feature type="modified residue" description="N-acetylalanine" evidence="2">
    <location>
        <position position="2"/>
    </location>
</feature>
<sequence>MALALLEDWCRIMSVDEQKSLMVTGIPVDYEEAEIQEVLQETLKSLGSYRLLGKIFRKQENANAVLLELLEDTDVSAIPSEVQGKGGVWKVVFKTPNQDTEFLERLNLFLEKEGQTVSGMFRALGHEGMSPATVPCISPELLAHLLGQAMAHAPQPLLPMRYRKLRVFSGSAVPAPEEEPFEVWLEQATEIVKEWPVTEAEKKRWLAESLRGPALDLMHIVQADNPSISVEECLEAFKQVFGSLESRRTAQVRYLKTYQEEGEKVSAYVLRLETLLRRAVEKRAIPRRIADQVRLEQVMAGATLNQMLWCRLRELKDQGPPPNFLELMKVIREEEEEEASFENESIEEPEEGDGYGGWNHEGDD</sequence>
<proteinExistence type="evidence at transcript level"/>
<organism>
    <name type="scientific">Macaca fascicularis</name>
    <name type="common">Crab-eating macaque</name>
    <name type="synonym">Cynomolgus monkey</name>
    <dbReference type="NCBI Taxonomy" id="9541"/>
    <lineage>
        <taxon>Eukaryota</taxon>
        <taxon>Metazoa</taxon>
        <taxon>Chordata</taxon>
        <taxon>Craniata</taxon>
        <taxon>Vertebrata</taxon>
        <taxon>Euteleostomi</taxon>
        <taxon>Mammalia</taxon>
        <taxon>Eutheria</taxon>
        <taxon>Euarchontoglires</taxon>
        <taxon>Primates</taxon>
        <taxon>Haplorrhini</taxon>
        <taxon>Catarrhini</taxon>
        <taxon>Cercopithecidae</taxon>
        <taxon>Cercopithecinae</taxon>
        <taxon>Macaca</taxon>
    </lineage>
</organism>
<name>PNMA2_MACFA</name>
<keyword id="KW-0007">Acetylation</keyword>
<keyword id="KW-0539">Nucleus</keyword>
<keyword id="KW-1185">Reference proteome</keyword>
<reference key="1">
    <citation type="submission" date="2000-08" db="EMBL/GenBank/DDBJ databases">
        <title>Isolation of full-length cDNA clones from macaque brain cDNA libraries.</title>
        <authorList>
            <person name="Osada N."/>
            <person name="Hida M."/>
            <person name="Kusuda J."/>
            <person name="Tanuma R."/>
            <person name="Iseki K."/>
            <person name="Hirai M."/>
            <person name="Terao K."/>
            <person name="Suzuki Y."/>
            <person name="Sugano S."/>
            <person name="Hashimoto K."/>
        </authorList>
    </citation>
    <scope>NUCLEOTIDE SEQUENCE [LARGE SCALE MRNA]</scope>
    <source>
        <tissue>Parietal cortex</tissue>
    </source>
</reference>
<gene>
    <name type="primary">PNMA2</name>
    <name type="ORF">QnpA-13619</name>
</gene>